<evidence type="ECO:0000255" key="1">
    <source>
        <dbReference type="HAMAP-Rule" id="MF_01321"/>
    </source>
</evidence>
<protein>
    <recommendedName>
        <fullName evidence="1">DNA-directed RNA polymerase subunit beta</fullName>
        <shortName evidence="1">RNAP subunit beta</shortName>
        <ecNumber evidence="1">2.7.7.6</ecNumber>
    </recommendedName>
    <alternativeName>
        <fullName evidence="1">RNA polymerase subunit beta</fullName>
    </alternativeName>
    <alternativeName>
        <fullName evidence="1">Transcriptase subunit beta</fullName>
    </alternativeName>
</protein>
<sequence length="1377" mass="153662">MQYLLSKKRIRKNFGKINLVSSIPNLIEVQKNSYNKEFLQLGVPVDCRENKGLQGVLNSIFPIHDLDGSAILEFVRYDFDEPKYDVEECIQRGLSYTAALKITLSLIVLDDSDKSDPKEIKGIKEQAVYFGDIPLMTANGTFVINGTERVVVSQMHRSPGVFFDHDDGKTHSTGKLIYSARVIPYRGSWLDFEFDAKDLLYFRIDRKRKLYVTTLLMALGMSSHDILNFYYESATYKKYKKSENGWIVDFLPELVSTKHLAYDLIDAQTGKVLLNAGQKITFRIAKMLADKGVKQILVKNDSLVGKLLAEDLVNNQTGEVLLGVGEEITNDILTIVNDLQITTVKVLAVGGQCGPYVRNTLFLDKNKDQKSSLVEIFRVLKPGEMATTAASRGLLDSLLFDNNRYDLSEVGRIKINSRLNLDIDLKNTCITVEDIKKIIKLLVDIKDGKALVDDIDHLGNRRVRSVGELVENQFRTGLVRIAKFIVERIGSVEIDAVVPNDLVNAKLLTSVIKEFFGTSQLSQFMDQTNALSQITHIRRLSALGPGGLNRDRAALEVRDVHPTHYGRICPIETPEGQNIGLINSLAIFAKINRYGFIESPYRRVINRRVTDEVVYLSALEEGRYKIAQADTSLCTNDCLIDGLVSCRYDGNFVMVLAQEVDFIDLTPMQVVSVAASMIPFLENDDANRALMGANMQRQAVPLLKSQAPLVGTGIESVVAHDSGTVVAALHDGIVEQVDSTRIVVKTSVKKDAGAPGVDIYNLKKFQRSNYNTCINQKVLVNVGDIVKKGDVIADGVATNKGEIALGRNVLVAFIAWNGYTFEDSILVSERIVKEDIYTSIHIEELELVARDTRLGPEEITRDIPNVNDESLRHLDEVGIVNIGAKVRTGDILVGKVTPKSESPVTPEEKLLRAIFGEKASEVKDSSLYVPPGITGTVIDVRVFSRRGIDKDERTLAIEKQKIRKLVKDYEDELAVIQHFTIVRVKELLVGQVAACSLDSIIIGDKLDEAMLNKLTNEQLLKLKADNSSIMDEISEIKCHYETTRAQLTSQLNSKIEKIQCGDDLPQGALRVVKVFIAIKHRLQPGDKMAGRHGNKGVVSKVVPEEDMPFLEDGTVVDIVLNPLGLPARMNVGQILETHLGWAGVNLGRKIGKMVDDYYSGNNQCTDEIRKFVKKIYANNSIADTIDQVNDQQLIEICQELRQGIYFSTPVFDGAKIADIKQMLELADVDKSGQVRLIDGRTGEYFDRRCTVGYQYLLKLHHLVDEKIHARSIGPYSLVTQQPLGGKSHFGGQRFGEMECWALEAYGAAYTLQELLTTKSDSVEGRIKMYQAIIRGNNNFVSGVPESLNVMIKELRSLCLNIQLEENDEEDENEDENY</sequence>
<feature type="chain" id="PRO_0000300362" description="DNA-directed RNA polymerase subunit beta">
    <location>
        <begin position="1"/>
        <end position="1377"/>
    </location>
</feature>
<accession>A5CC93</accession>
<comment type="function">
    <text evidence="1">DNA-dependent RNA polymerase catalyzes the transcription of DNA into RNA using the four ribonucleoside triphosphates as substrates.</text>
</comment>
<comment type="catalytic activity">
    <reaction evidence="1">
        <text>RNA(n) + a ribonucleoside 5'-triphosphate = RNA(n+1) + diphosphate</text>
        <dbReference type="Rhea" id="RHEA:21248"/>
        <dbReference type="Rhea" id="RHEA-COMP:14527"/>
        <dbReference type="Rhea" id="RHEA-COMP:17342"/>
        <dbReference type="ChEBI" id="CHEBI:33019"/>
        <dbReference type="ChEBI" id="CHEBI:61557"/>
        <dbReference type="ChEBI" id="CHEBI:140395"/>
        <dbReference type="EC" id="2.7.7.6"/>
    </reaction>
</comment>
<comment type="subunit">
    <text evidence="1">The RNAP catalytic core consists of 2 alpha, 1 beta, 1 beta' and 1 omega subunit. When a sigma factor is associated with the core the holoenzyme is formed, which can initiate transcription.</text>
</comment>
<comment type="similarity">
    <text evidence="1">Belongs to the RNA polymerase beta chain family.</text>
</comment>
<dbReference type="EC" id="2.7.7.6" evidence="1"/>
<dbReference type="EMBL" id="AM494475">
    <property type="protein sequence ID" value="CAM79274.1"/>
    <property type="molecule type" value="Genomic_DNA"/>
</dbReference>
<dbReference type="RefSeq" id="WP_011944332.1">
    <property type="nucleotide sequence ID" value="NC_009488.1"/>
</dbReference>
<dbReference type="SMR" id="A5CC93"/>
<dbReference type="KEGG" id="ots:OTBS_0208"/>
<dbReference type="eggNOG" id="COG0085">
    <property type="taxonomic scope" value="Bacteria"/>
</dbReference>
<dbReference type="HOGENOM" id="CLU_000524_4_0_5"/>
<dbReference type="Proteomes" id="UP000001565">
    <property type="component" value="Chromosome"/>
</dbReference>
<dbReference type="GO" id="GO:0000428">
    <property type="term" value="C:DNA-directed RNA polymerase complex"/>
    <property type="evidence" value="ECO:0007669"/>
    <property type="project" value="UniProtKB-KW"/>
</dbReference>
<dbReference type="GO" id="GO:0003677">
    <property type="term" value="F:DNA binding"/>
    <property type="evidence" value="ECO:0007669"/>
    <property type="project" value="UniProtKB-UniRule"/>
</dbReference>
<dbReference type="GO" id="GO:0003899">
    <property type="term" value="F:DNA-directed RNA polymerase activity"/>
    <property type="evidence" value="ECO:0007669"/>
    <property type="project" value="UniProtKB-UniRule"/>
</dbReference>
<dbReference type="GO" id="GO:0032549">
    <property type="term" value="F:ribonucleoside binding"/>
    <property type="evidence" value="ECO:0007669"/>
    <property type="project" value="InterPro"/>
</dbReference>
<dbReference type="GO" id="GO:0006351">
    <property type="term" value="P:DNA-templated transcription"/>
    <property type="evidence" value="ECO:0007669"/>
    <property type="project" value="UniProtKB-UniRule"/>
</dbReference>
<dbReference type="CDD" id="cd00653">
    <property type="entry name" value="RNA_pol_B_RPB2"/>
    <property type="match status" value="1"/>
</dbReference>
<dbReference type="Gene3D" id="2.40.50.100">
    <property type="match status" value="1"/>
</dbReference>
<dbReference type="Gene3D" id="2.40.50.150">
    <property type="match status" value="1"/>
</dbReference>
<dbReference type="Gene3D" id="3.90.1100.10">
    <property type="match status" value="2"/>
</dbReference>
<dbReference type="Gene3D" id="2.30.150.10">
    <property type="entry name" value="DNA-directed RNA polymerase, beta subunit, external 1 domain"/>
    <property type="match status" value="1"/>
</dbReference>
<dbReference type="Gene3D" id="2.40.270.10">
    <property type="entry name" value="DNA-directed RNA polymerase, subunit 2, domain 6"/>
    <property type="match status" value="2"/>
</dbReference>
<dbReference type="Gene3D" id="3.90.1800.10">
    <property type="entry name" value="RNA polymerase alpha subunit dimerisation domain"/>
    <property type="match status" value="1"/>
</dbReference>
<dbReference type="Gene3D" id="3.90.1110.10">
    <property type="entry name" value="RNA polymerase Rpb2, domain 2"/>
    <property type="match status" value="2"/>
</dbReference>
<dbReference type="HAMAP" id="MF_01321">
    <property type="entry name" value="RNApol_bact_RpoB"/>
    <property type="match status" value="1"/>
</dbReference>
<dbReference type="InterPro" id="IPR042107">
    <property type="entry name" value="DNA-dir_RNA_pol_bsu_ext_1_sf"/>
</dbReference>
<dbReference type="InterPro" id="IPR019462">
    <property type="entry name" value="DNA-dir_RNA_pol_bsu_external_1"/>
</dbReference>
<dbReference type="InterPro" id="IPR015712">
    <property type="entry name" value="DNA-dir_RNA_pol_su2"/>
</dbReference>
<dbReference type="InterPro" id="IPR007120">
    <property type="entry name" value="DNA-dir_RNAP_su2_dom"/>
</dbReference>
<dbReference type="InterPro" id="IPR037033">
    <property type="entry name" value="DNA-dir_RNAP_su2_hyb_sf"/>
</dbReference>
<dbReference type="InterPro" id="IPR010243">
    <property type="entry name" value="RNA_pol_bsu_bac"/>
</dbReference>
<dbReference type="InterPro" id="IPR007121">
    <property type="entry name" value="RNA_pol_bsu_CS"/>
</dbReference>
<dbReference type="InterPro" id="IPR007644">
    <property type="entry name" value="RNA_pol_bsu_protrusion"/>
</dbReference>
<dbReference type="InterPro" id="IPR007642">
    <property type="entry name" value="RNA_pol_Rpb2_2"/>
</dbReference>
<dbReference type="InterPro" id="IPR037034">
    <property type="entry name" value="RNA_pol_Rpb2_2_sf"/>
</dbReference>
<dbReference type="InterPro" id="IPR007645">
    <property type="entry name" value="RNA_pol_Rpb2_3"/>
</dbReference>
<dbReference type="InterPro" id="IPR007641">
    <property type="entry name" value="RNA_pol_Rpb2_7"/>
</dbReference>
<dbReference type="InterPro" id="IPR014724">
    <property type="entry name" value="RNA_pol_RPB2_OB-fold"/>
</dbReference>
<dbReference type="NCBIfam" id="NF001616">
    <property type="entry name" value="PRK00405.1"/>
    <property type="match status" value="1"/>
</dbReference>
<dbReference type="NCBIfam" id="TIGR02013">
    <property type="entry name" value="rpoB"/>
    <property type="match status" value="1"/>
</dbReference>
<dbReference type="PANTHER" id="PTHR20856">
    <property type="entry name" value="DNA-DIRECTED RNA POLYMERASE I SUBUNIT 2"/>
    <property type="match status" value="1"/>
</dbReference>
<dbReference type="Pfam" id="PF04563">
    <property type="entry name" value="RNA_pol_Rpb2_1"/>
    <property type="match status" value="1"/>
</dbReference>
<dbReference type="Pfam" id="PF04561">
    <property type="entry name" value="RNA_pol_Rpb2_2"/>
    <property type="match status" value="2"/>
</dbReference>
<dbReference type="Pfam" id="PF04565">
    <property type="entry name" value="RNA_pol_Rpb2_3"/>
    <property type="match status" value="1"/>
</dbReference>
<dbReference type="Pfam" id="PF10385">
    <property type="entry name" value="RNA_pol_Rpb2_45"/>
    <property type="match status" value="1"/>
</dbReference>
<dbReference type="Pfam" id="PF00562">
    <property type="entry name" value="RNA_pol_Rpb2_6"/>
    <property type="match status" value="1"/>
</dbReference>
<dbReference type="Pfam" id="PF04560">
    <property type="entry name" value="RNA_pol_Rpb2_7"/>
    <property type="match status" value="1"/>
</dbReference>
<dbReference type="SUPFAM" id="SSF64484">
    <property type="entry name" value="beta and beta-prime subunits of DNA dependent RNA-polymerase"/>
    <property type="match status" value="1"/>
</dbReference>
<dbReference type="PROSITE" id="PS01166">
    <property type="entry name" value="RNA_POL_BETA"/>
    <property type="match status" value="1"/>
</dbReference>
<reference key="1">
    <citation type="journal article" date="2007" name="Proc. Natl. Acad. Sci. U.S.A.">
        <title>The Orientia tsutsugamushi genome reveals massive proliferation of conjugative type IV secretion system and host-cell interaction genes.</title>
        <authorList>
            <person name="Cho N.-H."/>
            <person name="Kim H.-R."/>
            <person name="Lee J.-H."/>
            <person name="Kim S.-Y."/>
            <person name="Kim J."/>
            <person name="Cha S."/>
            <person name="Kim S.-Y."/>
            <person name="Darby A.C."/>
            <person name="Fuxelius H.-H."/>
            <person name="Yin J."/>
            <person name="Kim J.H."/>
            <person name="Kim J."/>
            <person name="Lee S.J."/>
            <person name="Koh Y.-S."/>
            <person name="Jang W.-J."/>
            <person name="Park K.-H."/>
            <person name="Andersson S.G.E."/>
            <person name="Choi M.-S."/>
            <person name="Kim I.-S."/>
        </authorList>
    </citation>
    <scope>NUCLEOTIDE SEQUENCE [LARGE SCALE GENOMIC DNA]</scope>
    <source>
        <strain>Boryong</strain>
    </source>
</reference>
<gene>
    <name evidence="1" type="primary">rpoB</name>
    <name type="ordered locus">OTBS_0208</name>
</gene>
<keyword id="KW-0240">DNA-directed RNA polymerase</keyword>
<keyword id="KW-0548">Nucleotidyltransferase</keyword>
<keyword id="KW-1185">Reference proteome</keyword>
<keyword id="KW-0804">Transcription</keyword>
<keyword id="KW-0808">Transferase</keyword>
<organism>
    <name type="scientific">Orientia tsutsugamushi (strain Boryong)</name>
    <name type="common">Rickettsia tsutsugamushi</name>
    <dbReference type="NCBI Taxonomy" id="357244"/>
    <lineage>
        <taxon>Bacteria</taxon>
        <taxon>Pseudomonadati</taxon>
        <taxon>Pseudomonadota</taxon>
        <taxon>Alphaproteobacteria</taxon>
        <taxon>Rickettsiales</taxon>
        <taxon>Rickettsiaceae</taxon>
        <taxon>Rickettsieae</taxon>
        <taxon>Orientia</taxon>
    </lineage>
</organism>
<name>RPOB_ORITB</name>
<proteinExistence type="inferred from homology"/>